<keyword id="KW-0010">Activator</keyword>
<keyword id="KW-0963">Cytoplasm</keyword>
<keyword id="KW-0238">DNA-binding</keyword>
<keyword id="KW-0597">Phosphoprotein</keyword>
<keyword id="KW-0804">Transcription</keyword>
<keyword id="KW-0805">Transcription regulation</keyword>
<keyword id="KW-0902">Two-component regulatory system</keyword>
<protein>
    <recommendedName>
        <fullName>Response regulator protein VraR</fullName>
    </recommendedName>
</protein>
<name>VRAR_STAES</name>
<gene>
    <name type="primary">vraR</name>
    <name type="ordered locus">SE_1569</name>
</gene>
<proteinExistence type="inferred from homology"/>
<organism>
    <name type="scientific">Staphylococcus epidermidis (strain ATCC 12228 / FDA PCI 1200)</name>
    <dbReference type="NCBI Taxonomy" id="176280"/>
    <lineage>
        <taxon>Bacteria</taxon>
        <taxon>Bacillati</taxon>
        <taxon>Bacillota</taxon>
        <taxon>Bacilli</taxon>
        <taxon>Bacillales</taxon>
        <taxon>Staphylococcaceae</taxon>
        <taxon>Staphylococcus</taxon>
    </lineage>
</organism>
<feature type="chain" id="PRO_0000081276" description="Response regulator protein VraR">
    <location>
        <begin position="1"/>
        <end position="209"/>
    </location>
</feature>
<feature type="domain" description="Response regulatory" evidence="2">
    <location>
        <begin position="4"/>
        <end position="120"/>
    </location>
</feature>
<feature type="domain" description="HTH luxR-type" evidence="3">
    <location>
        <begin position="141"/>
        <end position="206"/>
    </location>
</feature>
<feature type="DNA-binding region" description="H-T-H motif" evidence="3">
    <location>
        <begin position="165"/>
        <end position="184"/>
    </location>
</feature>
<feature type="modified residue" description="4-aspartylphosphate" evidence="2">
    <location>
        <position position="55"/>
    </location>
</feature>
<sequence>MAIKVLFVDDHEMVRIGISSYLSTQEDIEVVGEGASGKDAITKAHELKPDLILMDLLMDDMDGVEATTEIKKDLPQIKVVMLTSFIEDKEVYRALDSGVDSYILKTTSASDIADAVRKTYEGESVFEPEVLVKMRNRMKKRAELYEMLTEREMEILLLIAKGYSNQEIASASHITIKTVKTHVSNILSKLEVQDRTQAVIYAFQHNLIQ</sequence>
<comment type="function">
    <text evidence="1">Member of the two-component regulatory system VraS/VraR involved in the control of the cell wall peptidoglycan biosynthesis.</text>
</comment>
<comment type="subcellular location">
    <subcellularLocation>
        <location evidence="4">Cytoplasm</location>
    </subcellularLocation>
</comment>
<comment type="PTM">
    <text evidence="4">Phosphorylated by VraS.</text>
</comment>
<evidence type="ECO:0000250" key="1"/>
<evidence type="ECO:0000255" key="2">
    <source>
        <dbReference type="PROSITE-ProRule" id="PRU00169"/>
    </source>
</evidence>
<evidence type="ECO:0000255" key="3">
    <source>
        <dbReference type="PROSITE-ProRule" id="PRU00411"/>
    </source>
</evidence>
<evidence type="ECO:0000305" key="4"/>
<dbReference type="EMBL" id="AE015929">
    <property type="protein sequence ID" value="AAO05168.1"/>
    <property type="molecule type" value="Genomic_DNA"/>
</dbReference>
<dbReference type="RefSeq" id="NP_765124.1">
    <property type="nucleotide sequence ID" value="NC_004461.1"/>
</dbReference>
<dbReference type="RefSeq" id="WP_001830439.1">
    <property type="nucleotide sequence ID" value="NZ_WBME01000010.1"/>
</dbReference>
<dbReference type="SMR" id="Q8CNP9"/>
<dbReference type="GeneID" id="50018331"/>
<dbReference type="KEGG" id="sep:SE_1569"/>
<dbReference type="PATRIC" id="fig|176280.10.peg.1533"/>
<dbReference type="eggNOG" id="COG2197">
    <property type="taxonomic scope" value="Bacteria"/>
</dbReference>
<dbReference type="HOGENOM" id="CLU_000445_90_10_9"/>
<dbReference type="OrthoDB" id="9780153at2"/>
<dbReference type="Proteomes" id="UP000001411">
    <property type="component" value="Chromosome"/>
</dbReference>
<dbReference type="GO" id="GO:0005737">
    <property type="term" value="C:cytoplasm"/>
    <property type="evidence" value="ECO:0007669"/>
    <property type="project" value="UniProtKB-SubCell"/>
</dbReference>
<dbReference type="GO" id="GO:0003677">
    <property type="term" value="F:DNA binding"/>
    <property type="evidence" value="ECO:0007669"/>
    <property type="project" value="UniProtKB-KW"/>
</dbReference>
<dbReference type="GO" id="GO:0000160">
    <property type="term" value="P:phosphorelay signal transduction system"/>
    <property type="evidence" value="ECO:0007669"/>
    <property type="project" value="UniProtKB-KW"/>
</dbReference>
<dbReference type="GO" id="GO:0006355">
    <property type="term" value="P:regulation of DNA-templated transcription"/>
    <property type="evidence" value="ECO:0007669"/>
    <property type="project" value="InterPro"/>
</dbReference>
<dbReference type="CDD" id="cd06170">
    <property type="entry name" value="LuxR_C_like"/>
    <property type="match status" value="1"/>
</dbReference>
<dbReference type="CDD" id="cd17535">
    <property type="entry name" value="REC_NarL-like"/>
    <property type="match status" value="1"/>
</dbReference>
<dbReference type="Gene3D" id="3.40.50.2300">
    <property type="match status" value="1"/>
</dbReference>
<dbReference type="InterPro" id="IPR011006">
    <property type="entry name" value="CheY-like_superfamily"/>
</dbReference>
<dbReference type="InterPro" id="IPR016032">
    <property type="entry name" value="Sig_transdc_resp-reg_C-effctor"/>
</dbReference>
<dbReference type="InterPro" id="IPR001789">
    <property type="entry name" value="Sig_transdc_resp-reg_receiver"/>
</dbReference>
<dbReference type="InterPro" id="IPR000792">
    <property type="entry name" value="Tscrpt_reg_LuxR_C"/>
</dbReference>
<dbReference type="InterPro" id="IPR039420">
    <property type="entry name" value="WalR-like"/>
</dbReference>
<dbReference type="PANTHER" id="PTHR43214:SF37">
    <property type="entry name" value="TRANSCRIPTIONAL REGULATORY PROTEIN YDFI"/>
    <property type="match status" value="1"/>
</dbReference>
<dbReference type="PANTHER" id="PTHR43214">
    <property type="entry name" value="TWO-COMPONENT RESPONSE REGULATOR"/>
    <property type="match status" value="1"/>
</dbReference>
<dbReference type="Pfam" id="PF00196">
    <property type="entry name" value="GerE"/>
    <property type="match status" value="1"/>
</dbReference>
<dbReference type="Pfam" id="PF00072">
    <property type="entry name" value="Response_reg"/>
    <property type="match status" value="1"/>
</dbReference>
<dbReference type="PRINTS" id="PR00038">
    <property type="entry name" value="HTHLUXR"/>
</dbReference>
<dbReference type="SMART" id="SM00421">
    <property type="entry name" value="HTH_LUXR"/>
    <property type="match status" value="1"/>
</dbReference>
<dbReference type="SMART" id="SM00448">
    <property type="entry name" value="REC"/>
    <property type="match status" value="1"/>
</dbReference>
<dbReference type="SUPFAM" id="SSF46894">
    <property type="entry name" value="C-terminal effector domain of the bipartite response regulators"/>
    <property type="match status" value="1"/>
</dbReference>
<dbReference type="SUPFAM" id="SSF52172">
    <property type="entry name" value="CheY-like"/>
    <property type="match status" value="1"/>
</dbReference>
<dbReference type="PROSITE" id="PS50043">
    <property type="entry name" value="HTH_LUXR_2"/>
    <property type="match status" value="1"/>
</dbReference>
<dbReference type="PROSITE" id="PS50110">
    <property type="entry name" value="RESPONSE_REGULATORY"/>
    <property type="match status" value="1"/>
</dbReference>
<reference key="1">
    <citation type="journal article" date="2003" name="Mol. Microbiol.">
        <title>Genome-based analysis of virulence genes in a non-biofilm-forming Staphylococcus epidermidis strain (ATCC 12228).</title>
        <authorList>
            <person name="Zhang Y.-Q."/>
            <person name="Ren S.-X."/>
            <person name="Li H.-L."/>
            <person name="Wang Y.-X."/>
            <person name="Fu G."/>
            <person name="Yang J."/>
            <person name="Qin Z.-Q."/>
            <person name="Miao Y.-G."/>
            <person name="Wang W.-Y."/>
            <person name="Chen R.-S."/>
            <person name="Shen Y."/>
            <person name="Chen Z."/>
            <person name="Yuan Z.-H."/>
            <person name="Zhao G.-P."/>
            <person name="Qu D."/>
            <person name="Danchin A."/>
            <person name="Wen Y.-M."/>
        </authorList>
    </citation>
    <scope>NUCLEOTIDE SEQUENCE [LARGE SCALE GENOMIC DNA]</scope>
    <source>
        <strain>ATCC 12228 / FDA PCI 1200</strain>
    </source>
</reference>
<accession>Q8CNP9</accession>